<feature type="chain" id="PRO_0000358393" description="NADH-quinone oxidoreductase subunit B 1">
    <location>
        <begin position="1"/>
        <end position="158"/>
    </location>
</feature>
<feature type="binding site" evidence="2">
    <location>
        <position position="37"/>
    </location>
    <ligand>
        <name>[4Fe-4S] cluster</name>
        <dbReference type="ChEBI" id="CHEBI:49883"/>
    </ligand>
</feature>
<feature type="binding site" evidence="2">
    <location>
        <position position="38"/>
    </location>
    <ligand>
        <name>[4Fe-4S] cluster</name>
        <dbReference type="ChEBI" id="CHEBI:49883"/>
    </ligand>
</feature>
<feature type="binding site" evidence="2">
    <location>
        <position position="102"/>
    </location>
    <ligand>
        <name>[4Fe-4S] cluster</name>
        <dbReference type="ChEBI" id="CHEBI:49883"/>
    </ligand>
</feature>
<feature type="binding site" evidence="2">
    <location>
        <position position="132"/>
    </location>
    <ligand>
        <name>[4Fe-4S] cluster</name>
        <dbReference type="ChEBI" id="CHEBI:49883"/>
    </ligand>
</feature>
<accession>Q7NZI0</accession>
<proteinExistence type="inferred from homology"/>
<comment type="function">
    <text evidence="1">NDH-1 shuttles electrons from NADH, via FMN and iron-sulfur (Fe-S) centers, to quinones in the respiratory chain. Couples the redox reaction to proton translocation (for every two electrons transferred, four hydrogen ions are translocated across the cytoplasmic membrane), and thus conserves the redox energy in a proton gradient (By similarity).</text>
</comment>
<comment type="catalytic activity">
    <reaction evidence="2">
        <text>a quinone + NADH + 5 H(+)(in) = a quinol + NAD(+) + 4 H(+)(out)</text>
        <dbReference type="Rhea" id="RHEA:57888"/>
        <dbReference type="ChEBI" id="CHEBI:15378"/>
        <dbReference type="ChEBI" id="CHEBI:24646"/>
        <dbReference type="ChEBI" id="CHEBI:57540"/>
        <dbReference type="ChEBI" id="CHEBI:57945"/>
        <dbReference type="ChEBI" id="CHEBI:132124"/>
    </reaction>
</comment>
<comment type="cofactor">
    <cofactor evidence="2">
        <name>[4Fe-4S] cluster</name>
        <dbReference type="ChEBI" id="CHEBI:49883"/>
    </cofactor>
    <text evidence="2">Binds 1 [4Fe-4S] cluster.</text>
</comment>
<comment type="subunit">
    <text evidence="2">NDH-1 is composed of 14 different subunits. Subunits NuoB, C, D, E, F, and G constitute the peripheral sector of the complex.</text>
</comment>
<comment type="subcellular location">
    <subcellularLocation>
        <location evidence="2">Cell inner membrane</location>
        <topology evidence="2">Peripheral membrane protein</topology>
        <orientation evidence="2">Cytoplasmic side</orientation>
    </subcellularLocation>
</comment>
<comment type="similarity">
    <text evidence="2">Belongs to the complex I 20 kDa subunit family.</text>
</comment>
<evidence type="ECO:0000250" key="1"/>
<evidence type="ECO:0000255" key="2">
    <source>
        <dbReference type="HAMAP-Rule" id="MF_01356"/>
    </source>
</evidence>
<reference key="1">
    <citation type="journal article" date="2003" name="Proc. Natl. Acad. Sci. U.S.A.">
        <title>The complete genome sequence of Chromobacterium violaceum reveals remarkable and exploitable bacterial adaptability.</title>
        <authorList>
            <person name="Vasconcelos A.T.R."/>
            <person name="de Almeida D.F."/>
            <person name="Hungria M."/>
            <person name="Guimaraes C.T."/>
            <person name="Antonio R.V."/>
            <person name="Almeida F.C."/>
            <person name="de Almeida L.G.P."/>
            <person name="de Almeida R."/>
            <person name="Alves-Gomes J.A."/>
            <person name="Andrade E.M."/>
            <person name="Araripe J."/>
            <person name="de Araujo M.F.F."/>
            <person name="Astolfi-Filho S."/>
            <person name="Azevedo V."/>
            <person name="Baptista A.J."/>
            <person name="Bataus L.A.M."/>
            <person name="Batista J.S."/>
            <person name="Belo A."/>
            <person name="van den Berg C."/>
            <person name="Bogo M."/>
            <person name="Bonatto S."/>
            <person name="Bordignon J."/>
            <person name="Brigido M.M."/>
            <person name="Brito C.A."/>
            <person name="Brocchi M."/>
            <person name="Burity H.A."/>
            <person name="Camargo A.A."/>
            <person name="Cardoso D.D.P."/>
            <person name="Carneiro N.P."/>
            <person name="Carraro D.M."/>
            <person name="Carvalho C.M.B."/>
            <person name="Cascardo J.C.M."/>
            <person name="Cavada B.S."/>
            <person name="Chueire L.M.O."/>
            <person name="Creczynski-Pasa T.B."/>
            <person name="Cunha-Junior N.C."/>
            <person name="Fagundes N."/>
            <person name="Falcao C.L."/>
            <person name="Fantinatti F."/>
            <person name="Farias I.P."/>
            <person name="Felipe M.S.S."/>
            <person name="Ferrari L.P."/>
            <person name="Ferro J.A."/>
            <person name="Ferro M.I.T."/>
            <person name="Franco G.R."/>
            <person name="Freitas N.S.A."/>
            <person name="Furlan L.R."/>
            <person name="Gazzinelli R.T."/>
            <person name="Gomes E.A."/>
            <person name="Goncalves P.R."/>
            <person name="Grangeiro T.B."/>
            <person name="Grattapaglia D."/>
            <person name="Grisard E.C."/>
            <person name="Hanna E.S."/>
            <person name="Jardim S.N."/>
            <person name="Laurino J."/>
            <person name="Leoi L.C.T."/>
            <person name="Lima L.F.A."/>
            <person name="Loureiro M.F."/>
            <person name="Lyra M.C.C.P."/>
            <person name="Madeira H.M.F."/>
            <person name="Manfio G.P."/>
            <person name="Maranhao A.Q."/>
            <person name="Martins W.S."/>
            <person name="di Mauro S.M.Z."/>
            <person name="de Medeiros S.R.B."/>
            <person name="Meissner R.V."/>
            <person name="Moreira M.A.M."/>
            <person name="Nascimento F.F."/>
            <person name="Nicolas M.F."/>
            <person name="Oliveira J.G."/>
            <person name="Oliveira S.C."/>
            <person name="Paixao R.F.C."/>
            <person name="Parente J.A."/>
            <person name="Pedrosa F.O."/>
            <person name="Pena S.D.J."/>
            <person name="Pereira J.O."/>
            <person name="Pereira M."/>
            <person name="Pinto L.S.R.C."/>
            <person name="Pinto L.S."/>
            <person name="Porto J.I.R."/>
            <person name="Potrich D.P."/>
            <person name="Ramalho-Neto C.E."/>
            <person name="Reis A.M.M."/>
            <person name="Rigo L.U."/>
            <person name="Rondinelli E."/>
            <person name="Santos E.B.P."/>
            <person name="Santos F.R."/>
            <person name="Schneider M.P.C."/>
            <person name="Seuanez H.N."/>
            <person name="Silva A.M.R."/>
            <person name="da Silva A.L.C."/>
            <person name="Silva D.W."/>
            <person name="Silva R."/>
            <person name="Simoes I.C."/>
            <person name="Simon D."/>
            <person name="Soares C.M.A."/>
            <person name="Soares R.B.A."/>
            <person name="Souza E.M."/>
            <person name="Souza K.R.L."/>
            <person name="Souza R.C."/>
            <person name="Steffens M.B.R."/>
            <person name="Steindel M."/>
            <person name="Teixeira S.R."/>
            <person name="Urmenyi T."/>
            <person name="Vettore A."/>
            <person name="Wassem R."/>
            <person name="Zaha A."/>
            <person name="Simpson A.J.G."/>
        </authorList>
    </citation>
    <scope>NUCLEOTIDE SEQUENCE [LARGE SCALE GENOMIC DNA]</scope>
    <source>
        <strain>ATCC 12472 / DSM 30191 / JCM 1249 / CCUG 213 / NBRC 12614 / NCIMB 9131 / NCTC 9757 / MK</strain>
    </source>
</reference>
<dbReference type="EC" id="7.1.1.-" evidence="2"/>
<dbReference type="EMBL" id="AE016825">
    <property type="protein sequence ID" value="AAQ58616.1"/>
    <property type="molecule type" value="Genomic_DNA"/>
</dbReference>
<dbReference type="RefSeq" id="WP_011134497.1">
    <property type="nucleotide sequence ID" value="NC_005085.1"/>
</dbReference>
<dbReference type="SMR" id="Q7NZI0"/>
<dbReference type="STRING" id="243365.CV_0942"/>
<dbReference type="KEGG" id="cvi:CV_0942"/>
<dbReference type="eggNOG" id="COG0377">
    <property type="taxonomic scope" value="Bacteria"/>
</dbReference>
<dbReference type="HOGENOM" id="CLU_055737_7_3_4"/>
<dbReference type="OrthoDB" id="9786737at2"/>
<dbReference type="Proteomes" id="UP000001424">
    <property type="component" value="Chromosome"/>
</dbReference>
<dbReference type="GO" id="GO:0005886">
    <property type="term" value="C:plasma membrane"/>
    <property type="evidence" value="ECO:0007669"/>
    <property type="project" value="UniProtKB-SubCell"/>
</dbReference>
<dbReference type="GO" id="GO:0045271">
    <property type="term" value="C:respiratory chain complex I"/>
    <property type="evidence" value="ECO:0007669"/>
    <property type="project" value="TreeGrafter"/>
</dbReference>
<dbReference type="GO" id="GO:0051539">
    <property type="term" value="F:4 iron, 4 sulfur cluster binding"/>
    <property type="evidence" value="ECO:0007669"/>
    <property type="project" value="UniProtKB-KW"/>
</dbReference>
<dbReference type="GO" id="GO:0005506">
    <property type="term" value="F:iron ion binding"/>
    <property type="evidence" value="ECO:0007669"/>
    <property type="project" value="UniProtKB-UniRule"/>
</dbReference>
<dbReference type="GO" id="GO:0008137">
    <property type="term" value="F:NADH dehydrogenase (ubiquinone) activity"/>
    <property type="evidence" value="ECO:0007669"/>
    <property type="project" value="InterPro"/>
</dbReference>
<dbReference type="GO" id="GO:0050136">
    <property type="term" value="F:NADH:ubiquinone reductase (non-electrogenic) activity"/>
    <property type="evidence" value="ECO:0007669"/>
    <property type="project" value="UniProtKB-UniRule"/>
</dbReference>
<dbReference type="GO" id="GO:0048038">
    <property type="term" value="F:quinone binding"/>
    <property type="evidence" value="ECO:0007669"/>
    <property type="project" value="UniProtKB-KW"/>
</dbReference>
<dbReference type="GO" id="GO:0009060">
    <property type="term" value="P:aerobic respiration"/>
    <property type="evidence" value="ECO:0007669"/>
    <property type="project" value="TreeGrafter"/>
</dbReference>
<dbReference type="GO" id="GO:0015990">
    <property type="term" value="P:electron transport coupled proton transport"/>
    <property type="evidence" value="ECO:0007669"/>
    <property type="project" value="TreeGrafter"/>
</dbReference>
<dbReference type="FunFam" id="3.40.50.12280:FF:000001">
    <property type="entry name" value="NADH-quinone oxidoreductase subunit B 2"/>
    <property type="match status" value="1"/>
</dbReference>
<dbReference type="Gene3D" id="3.40.50.12280">
    <property type="match status" value="1"/>
</dbReference>
<dbReference type="HAMAP" id="MF_01356">
    <property type="entry name" value="NDH1_NuoB"/>
    <property type="match status" value="1"/>
</dbReference>
<dbReference type="InterPro" id="IPR006137">
    <property type="entry name" value="NADH_UbQ_OxRdtase-like_20kDa"/>
</dbReference>
<dbReference type="InterPro" id="IPR006138">
    <property type="entry name" value="NADH_UQ_OxRdtase_20Kd_su"/>
</dbReference>
<dbReference type="NCBIfam" id="TIGR01957">
    <property type="entry name" value="nuoB_fam"/>
    <property type="match status" value="1"/>
</dbReference>
<dbReference type="NCBIfam" id="NF005012">
    <property type="entry name" value="PRK06411.1"/>
    <property type="match status" value="1"/>
</dbReference>
<dbReference type="PANTHER" id="PTHR11995">
    <property type="entry name" value="NADH DEHYDROGENASE"/>
    <property type="match status" value="1"/>
</dbReference>
<dbReference type="PANTHER" id="PTHR11995:SF14">
    <property type="entry name" value="NADH DEHYDROGENASE [UBIQUINONE] IRON-SULFUR PROTEIN 7, MITOCHONDRIAL"/>
    <property type="match status" value="1"/>
</dbReference>
<dbReference type="Pfam" id="PF01058">
    <property type="entry name" value="Oxidored_q6"/>
    <property type="match status" value="1"/>
</dbReference>
<dbReference type="SUPFAM" id="SSF56770">
    <property type="entry name" value="HydA/Nqo6-like"/>
    <property type="match status" value="1"/>
</dbReference>
<dbReference type="PROSITE" id="PS01150">
    <property type="entry name" value="COMPLEX1_20K"/>
    <property type="match status" value="1"/>
</dbReference>
<name>NUOB1_CHRVO</name>
<keyword id="KW-0004">4Fe-4S</keyword>
<keyword id="KW-0997">Cell inner membrane</keyword>
<keyword id="KW-1003">Cell membrane</keyword>
<keyword id="KW-0408">Iron</keyword>
<keyword id="KW-0411">Iron-sulfur</keyword>
<keyword id="KW-0472">Membrane</keyword>
<keyword id="KW-0479">Metal-binding</keyword>
<keyword id="KW-0520">NAD</keyword>
<keyword id="KW-0874">Quinone</keyword>
<keyword id="KW-1185">Reference proteome</keyword>
<keyword id="KW-1278">Translocase</keyword>
<keyword id="KW-0813">Transport</keyword>
<keyword id="KW-0830">Ubiquinone</keyword>
<sequence>MGVEGILEKGFVTTTADKLINYTRTGSLWPMTFGLACCAVEMMHAGAARYDLDRFGVVFRPSPRQSDLMIVAGTLCNKMAPALRKVYDQMAEPRWVISMGSCANGGGYYHYSYSVVRGCDRIVPVDVYVPGCPPTAEALLYGIIQLQNKIKRTNTIAR</sequence>
<organism>
    <name type="scientific">Chromobacterium violaceum (strain ATCC 12472 / DSM 30191 / JCM 1249 / CCUG 213 / NBRC 12614 / NCIMB 9131 / NCTC 9757 / MK)</name>
    <dbReference type="NCBI Taxonomy" id="243365"/>
    <lineage>
        <taxon>Bacteria</taxon>
        <taxon>Pseudomonadati</taxon>
        <taxon>Pseudomonadota</taxon>
        <taxon>Betaproteobacteria</taxon>
        <taxon>Neisseriales</taxon>
        <taxon>Chromobacteriaceae</taxon>
        <taxon>Chromobacterium</taxon>
    </lineage>
</organism>
<protein>
    <recommendedName>
        <fullName evidence="2">NADH-quinone oxidoreductase subunit B 1</fullName>
        <ecNumber evidence="2">7.1.1.-</ecNumber>
    </recommendedName>
    <alternativeName>
        <fullName evidence="2">NADH dehydrogenase I subunit B 1</fullName>
    </alternativeName>
    <alternativeName>
        <fullName evidence="2">NDH-1 subunit B 1</fullName>
    </alternativeName>
</protein>
<gene>
    <name evidence="2" type="primary">nuoB1</name>
    <name type="ordered locus">CV_0942</name>
</gene>